<accession>B4TK60</accession>
<dbReference type="EC" id="2.1.3.15" evidence="1"/>
<dbReference type="EMBL" id="CP001120">
    <property type="protein sequence ID" value="ACF68366.1"/>
    <property type="molecule type" value="Genomic_DNA"/>
</dbReference>
<dbReference type="RefSeq" id="WP_000055753.1">
    <property type="nucleotide sequence ID" value="NC_011083.1"/>
</dbReference>
<dbReference type="SMR" id="B4TK60"/>
<dbReference type="KEGG" id="seh:SeHA_C0270"/>
<dbReference type="HOGENOM" id="CLU_015486_0_2_6"/>
<dbReference type="UniPathway" id="UPA00655">
    <property type="reaction ID" value="UER00711"/>
</dbReference>
<dbReference type="Proteomes" id="UP000001866">
    <property type="component" value="Chromosome"/>
</dbReference>
<dbReference type="GO" id="GO:0009317">
    <property type="term" value="C:acetyl-CoA carboxylase complex"/>
    <property type="evidence" value="ECO:0007669"/>
    <property type="project" value="InterPro"/>
</dbReference>
<dbReference type="GO" id="GO:0003989">
    <property type="term" value="F:acetyl-CoA carboxylase activity"/>
    <property type="evidence" value="ECO:0007669"/>
    <property type="project" value="InterPro"/>
</dbReference>
<dbReference type="GO" id="GO:0005524">
    <property type="term" value="F:ATP binding"/>
    <property type="evidence" value="ECO:0007669"/>
    <property type="project" value="UniProtKB-KW"/>
</dbReference>
<dbReference type="GO" id="GO:0016743">
    <property type="term" value="F:carboxyl- or carbamoyltransferase activity"/>
    <property type="evidence" value="ECO:0007669"/>
    <property type="project" value="UniProtKB-UniRule"/>
</dbReference>
<dbReference type="GO" id="GO:0006633">
    <property type="term" value="P:fatty acid biosynthetic process"/>
    <property type="evidence" value="ECO:0007669"/>
    <property type="project" value="UniProtKB-KW"/>
</dbReference>
<dbReference type="GO" id="GO:2001295">
    <property type="term" value="P:malonyl-CoA biosynthetic process"/>
    <property type="evidence" value="ECO:0007669"/>
    <property type="project" value="UniProtKB-UniRule"/>
</dbReference>
<dbReference type="FunFam" id="3.90.226.10:FF:000008">
    <property type="entry name" value="Acetyl-coenzyme A carboxylase carboxyl transferase subunit alpha"/>
    <property type="match status" value="1"/>
</dbReference>
<dbReference type="Gene3D" id="3.90.226.10">
    <property type="entry name" value="2-enoyl-CoA Hydratase, Chain A, domain 1"/>
    <property type="match status" value="1"/>
</dbReference>
<dbReference type="HAMAP" id="MF_00823">
    <property type="entry name" value="AcetylCoA_CT_alpha"/>
    <property type="match status" value="1"/>
</dbReference>
<dbReference type="InterPro" id="IPR001095">
    <property type="entry name" value="Acetyl_CoA_COase_a_su"/>
</dbReference>
<dbReference type="InterPro" id="IPR029045">
    <property type="entry name" value="ClpP/crotonase-like_dom_sf"/>
</dbReference>
<dbReference type="InterPro" id="IPR011763">
    <property type="entry name" value="COA_CT_C"/>
</dbReference>
<dbReference type="NCBIfam" id="TIGR00513">
    <property type="entry name" value="accA"/>
    <property type="match status" value="1"/>
</dbReference>
<dbReference type="NCBIfam" id="NF041504">
    <property type="entry name" value="AccA_sub"/>
    <property type="match status" value="1"/>
</dbReference>
<dbReference type="NCBIfam" id="NF004344">
    <property type="entry name" value="PRK05724.1"/>
    <property type="match status" value="1"/>
</dbReference>
<dbReference type="PANTHER" id="PTHR42853">
    <property type="entry name" value="ACETYL-COENZYME A CARBOXYLASE CARBOXYL TRANSFERASE SUBUNIT ALPHA"/>
    <property type="match status" value="1"/>
</dbReference>
<dbReference type="PANTHER" id="PTHR42853:SF3">
    <property type="entry name" value="ACETYL-COENZYME A CARBOXYLASE CARBOXYL TRANSFERASE SUBUNIT ALPHA, CHLOROPLASTIC"/>
    <property type="match status" value="1"/>
</dbReference>
<dbReference type="Pfam" id="PF03255">
    <property type="entry name" value="ACCA"/>
    <property type="match status" value="1"/>
</dbReference>
<dbReference type="PRINTS" id="PR01069">
    <property type="entry name" value="ACCCTRFRASEA"/>
</dbReference>
<dbReference type="SUPFAM" id="SSF52096">
    <property type="entry name" value="ClpP/crotonase"/>
    <property type="match status" value="1"/>
</dbReference>
<dbReference type="PROSITE" id="PS50989">
    <property type="entry name" value="COA_CT_CTER"/>
    <property type="match status" value="1"/>
</dbReference>
<gene>
    <name evidence="1" type="primary">accA</name>
    <name type="ordered locus">SeHA_C0270</name>
</gene>
<comment type="function">
    <text evidence="1">Component of the acetyl coenzyme A carboxylase (ACC) complex. First, biotin carboxylase catalyzes the carboxylation of biotin on its carrier protein (BCCP) and then the CO(2) group is transferred by the carboxyltransferase to acetyl-CoA to form malonyl-CoA.</text>
</comment>
<comment type="catalytic activity">
    <reaction evidence="1">
        <text>N(6)-carboxybiotinyl-L-lysyl-[protein] + acetyl-CoA = N(6)-biotinyl-L-lysyl-[protein] + malonyl-CoA</text>
        <dbReference type="Rhea" id="RHEA:54728"/>
        <dbReference type="Rhea" id="RHEA-COMP:10505"/>
        <dbReference type="Rhea" id="RHEA-COMP:10506"/>
        <dbReference type="ChEBI" id="CHEBI:57288"/>
        <dbReference type="ChEBI" id="CHEBI:57384"/>
        <dbReference type="ChEBI" id="CHEBI:83144"/>
        <dbReference type="ChEBI" id="CHEBI:83145"/>
        <dbReference type="EC" id="2.1.3.15"/>
    </reaction>
</comment>
<comment type="pathway">
    <text evidence="1">Lipid metabolism; malonyl-CoA biosynthesis; malonyl-CoA from acetyl-CoA: step 1/1.</text>
</comment>
<comment type="subunit">
    <text evidence="1">Acetyl-CoA carboxylase is a heterohexamer composed of biotin carboxyl carrier protein (AccB), biotin carboxylase (AccC) and two subunits each of ACCase subunit alpha (AccA) and ACCase subunit beta (AccD).</text>
</comment>
<comment type="subcellular location">
    <subcellularLocation>
        <location evidence="1">Cytoplasm</location>
    </subcellularLocation>
</comment>
<comment type="similarity">
    <text evidence="1">Belongs to the AccA family.</text>
</comment>
<reference key="1">
    <citation type="journal article" date="2011" name="J. Bacteriol.">
        <title>Comparative genomics of 28 Salmonella enterica isolates: evidence for CRISPR-mediated adaptive sublineage evolution.</title>
        <authorList>
            <person name="Fricke W.F."/>
            <person name="Mammel M.K."/>
            <person name="McDermott P.F."/>
            <person name="Tartera C."/>
            <person name="White D.G."/>
            <person name="Leclerc J.E."/>
            <person name="Ravel J."/>
            <person name="Cebula T.A."/>
        </authorList>
    </citation>
    <scope>NUCLEOTIDE SEQUENCE [LARGE SCALE GENOMIC DNA]</scope>
    <source>
        <strain>SL476</strain>
    </source>
</reference>
<feature type="chain" id="PRO_1000134518" description="Acetyl-coenzyme A carboxylase carboxyl transferase subunit alpha">
    <location>
        <begin position="1"/>
        <end position="319"/>
    </location>
</feature>
<feature type="domain" description="CoA carboxyltransferase C-terminal" evidence="2">
    <location>
        <begin position="35"/>
        <end position="296"/>
    </location>
</feature>
<organism>
    <name type="scientific">Salmonella heidelberg (strain SL476)</name>
    <dbReference type="NCBI Taxonomy" id="454169"/>
    <lineage>
        <taxon>Bacteria</taxon>
        <taxon>Pseudomonadati</taxon>
        <taxon>Pseudomonadota</taxon>
        <taxon>Gammaproteobacteria</taxon>
        <taxon>Enterobacterales</taxon>
        <taxon>Enterobacteriaceae</taxon>
        <taxon>Salmonella</taxon>
    </lineage>
</organism>
<sequence length="319" mass="35344">MSLNFLDFEQPIAELEAKIDSLTAVSRQDEKLDINIDEEVHRLREKSVELTRKIFADLGAWQVAQLARHPQRPYTLDYVRLAFDEFDELAGDRAYADDKAIVGGIARLEGRPVMIIGHQKGRETKEKIRRNFGMPAPEGYRKALRLMEMAERFNMPIITFIDTPGAYPGVGAEERGQSEAIARNLREMSRLNVPVICTVIGEGGSGGALAIGVGDKVNMLQYSTYSVISPEGCASILWKSADKAPLAAEAMGIIAPRLKELKLIDSIIPEPLGGAHRNPEAMAASLKAQLLEDLADLDVLSTDDLKNRRYQRLMSYGYA</sequence>
<proteinExistence type="inferred from homology"/>
<name>ACCA_SALHS</name>
<protein>
    <recommendedName>
        <fullName evidence="1">Acetyl-coenzyme A carboxylase carboxyl transferase subunit alpha</fullName>
        <shortName evidence="1">ACCase subunit alpha</shortName>
        <shortName evidence="1">Acetyl-CoA carboxylase carboxyltransferase subunit alpha</shortName>
        <ecNumber evidence="1">2.1.3.15</ecNumber>
    </recommendedName>
</protein>
<evidence type="ECO:0000255" key="1">
    <source>
        <dbReference type="HAMAP-Rule" id="MF_00823"/>
    </source>
</evidence>
<evidence type="ECO:0000255" key="2">
    <source>
        <dbReference type="PROSITE-ProRule" id="PRU01137"/>
    </source>
</evidence>
<keyword id="KW-0067">ATP-binding</keyword>
<keyword id="KW-0963">Cytoplasm</keyword>
<keyword id="KW-0275">Fatty acid biosynthesis</keyword>
<keyword id="KW-0276">Fatty acid metabolism</keyword>
<keyword id="KW-0444">Lipid biosynthesis</keyword>
<keyword id="KW-0443">Lipid metabolism</keyword>
<keyword id="KW-0547">Nucleotide-binding</keyword>
<keyword id="KW-0808">Transferase</keyword>